<gene>
    <name evidence="1" type="primary">pstB</name>
    <name type="ordered locus">PM0433</name>
</gene>
<feature type="chain" id="PRO_0000092854" description="Phosphate import ATP-binding protein PstB">
    <location>
        <begin position="1"/>
        <end position="259"/>
    </location>
</feature>
<feature type="domain" description="ABC transporter" evidence="1">
    <location>
        <begin position="13"/>
        <end position="254"/>
    </location>
</feature>
<feature type="binding site" evidence="1">
    <location>
        <begin position="45"/>
        <end position="52"/>
    </location>
    <ligand>
        <name>ATP</name>
        <dbReference type="ChEBI" id="CHEBI:30616"/>
    </ligand>
</feature>
<keyword id="KW-0067">ATP-binding</keyword>
<keyword id="KW-0997">Cell inner membrane</keyword>
<keyword id="KW-1003">Cell membrane</keyword>
<keyword id="KW-0472">Membrane</keyword>
<keyword id="KW-0547">Nucleotide-binding</keyword>
<keyword id="KW-0592">Phosphate transport</keyword>
<keyword id="KW-1185">Reference proteome</keyword>
<keyword id="KW-1278">Translocase</keyword>
<keyword id="KW-0813">Transport</keyword>
<organism>
    <name type="scientific">Pasteurella multocida (strain Pm70)</name>
    <dbReference type="NCBI Taxonomy" id="272843"/>
    <lineage>
        <taxon>Bacteria</taxon>
        <taxon>Pseudomonadati</taxon>
        <taxon>Pseudomonadota</taxon>
        <taxon>Gammaproteobacteria</taxon>
        <taxon>Pasteurellales</taxon>
        <taxon>Pasteurellaceae</taxon>
        <taxon>Pasteurella</taxon>
    </lineage>
</organism>
<comment type="function">
    <text evidence="1">Part of the ABC transporter complex PstSACB involved in phosphate import. Responsible for energy coupling to the transport system.</text>
</comment>
<comment type="catalytic activity">
    <reaction evidence="1">
        <text>phosphate(out) + ATP + H2O = ADP + 2 phosphate(in) + H(+)</text>
        <dbReference type="Rhea" id="RHEA:24440"/>
        <dbReference type="ChEBI" id="CHEBI:15377"/>
        <dbReference type="ChEBI" id="CHEBI:15378"/>
        <dbReference type="ChEBI" id="CHEBI:30616"/>
        <dbReference type="ChEBI" id="CHEBI:43474"/>
        <dbReference type="ChEBI" id="CHEBI:456216"/>
        <dbReference type="EC" id="7.3.2.1"/>
    </reaction>
</comment>
<comment type="subunit">
    <text evidence="1">The complex is composed of two ATP-binding proteins (PstB), two transmembrane proteins (PstC and PstA) and a solute-binding protein (PstS).</text>
</comment>
<comment type="subcellular location">
    <subcellularLocation>
        <location evidence="1">Cell inner membrane</location>
        <topology evidence="1">Peripheral membrane protein</topology>
    </subcellularLocation>
</comment>
<comment type="similarity">
    <text evidence="1">Belongs to the ABC transporter superfamily. Phosphate importer (TC 3.A.1.7) family.</text>
</comment>
<evidence type="ECO:0000255" key="1">
    <source>
        <dbReference type="HAMAP-Rule" id="MF_01702"/>
    </source>
</evidence>
<proteinExistence type="inferred from homology"/>
<reference key="1">
    <citation type="journal article" date="2001" name="Proc. Natl. Acad. Sci. U.S.A.">
        <title>Complete genomic sequence of Pasteurella multocida Pm70.</title>
        <authorList>
            <person name="May B.J."/>
            <person name="Zhang Q."/>
            <person name="Li L.L."/>
            <person name="Paustian M.L."/>
            <person name="Whittam T.S."/>
            <person name="Kapur V."/>
        </authorList>
    </citation>
    <scope>NUCLEOTIDE SEQUENCE [LARGE SCALE GENOMIC DNA]</scope>
    <source>
        <strain>Pm70</strain>
    </source>
</reference>
<protein>
    <recommendedName>
        <fullName evidence="1">Phosphate import ATP-binding protein PstB</fullName>
        <ecNumber evidence="1">7.3.2.1</ecNumber>
    </recommendedName>
    <alternativeName>
        <fullName evidence="1">ABC phosphate transporter</fullName>
    </alternativeName>
    <alternativeName>
        <fullName evidence="1">Phosphate-transporting ATPase</fullName>
    </alternativeName>
</protein>
<accession>Q9CNJ7</accession>
<dbReference type="EC" id="7.3.2.1" evidence="1"/>
<dbReference type="EMBL" id="AE004439">
    <property type="protein sequence ID" value="AAK02517.1"/>
    <property type="molecule type" value="Genomic_DNA"/>
</dbReference>
<dbReference type="RefSeq" id="WP_005726154.1">
    <property type="nucleotide sequence ID" value="NC_002663.1"/>
</dbReference>
<dbReference type="SMR" id="Q9CNJ7"/>
<dbReference type="STRING" id="272843.PM0433"/>
<dbReference type="EnsemblBacteria" id="AAK02517">
    <property type="protein sequence ID" value="AAK02517"/>
    <property type="gene ID" value="PM0433"/>
</dbReference>
<dbReference type="GeneID" id="77206083"/>
<dbReference type="KEGG" id="pmu:PM0433"/>
<dbReference type="PATRIC" id="fig|272843.6.peg.445"/>
<dbReference type="HOGENOM" id="CLU_000604_1_22_6"/>
<dbReference type="OrthoDB" id="9802264at2"/>
<dbReference type="Proteomes" id="UP000000809">
    <property type="component" value="Chromosome"/>
</dbReference>
<dbReference type="GO" id="GO:0005886">
    <property type="term" value="C:plasma membrane"/>
    <property type="evidence" value="ECO:0007669"/>
    <property type="project" value="UniProtKB-SubCell"/>
</dbReference>
<dbReference type="GO" id="GO:0005524">
    <property type="term" value="F:ATP binding"/>
    <property type="evidence" value="ECO:0007669"/>
    <property type="project" value="UniProtKB-KW"/>
</dbReference>
<dbReference type="GO" id="GO:0016887">
    <property type="term" value="F:ATP hydrolysis activity"/>
    <property type="evidence" value="ECO:0007669"/>
    <property type="project" value="InterPro"/>
</dbReference>
<dbReference type="GO" id="GO:0015415">
    <property type="term" value="F:ATPase-coupled phosphate ion transmembrane transporter activity"/>
    <property type="evidence" value="ECO:0007669"/>
    <property type="project" value="UniProtKB-EC"/>
</dbReference>
<dbReference type="GO" id="GO:0035435">
    <property type="term" value="P:phosphate ion transmembrane transport"/>
    <property type="evidence" value="ECO:0007669"/>
    <property type="project" value="InterPro"/>
</dbReference>
<dbReference type="CDD" id="cd03260">
    <property type="entry name" value="ABC_PstB_phosphate_transporter"/>
    <property type="match status" value="1"/>
</dbReference>
<dbReference type="FunFam" id="3.40.50.300:FF:000132">
    <property type="entry name" value="Phosphate import ATP-binding protein PstB"/>
    <property type="match status" value="1"/>
</dbReference>
<dbReference type="Gene3D" id="3.40.50.300">
    <property type="entry name" value="P-loop containing nucleotide triphosphate hydrolases"/>
    <property type="match status" value="1"/>
</dbReference>
<dbReference type="InterPro" id="IPR003593">
    <property type="entry name" value="AAA+_ATPase"/>
</dbReference>
<dbReference type="InterPro" id="IPR003439">
    <property type="entry name" value="ABC_transporter-like_ATP-bd"/>
</dbReference>
<dbReference type="InterPro" id="IPR017871">
    <property type="entry name" value="ABC_transporter-like_CS"/>
</dbReference>
<dbReference type="InterPro" id="IPR027417">
    <property type="entry name" value="P-loop_NTPase"/>
</dbReference>
<dbReference type="InterPro" id="IPR005670">
    <property type="entry name" value="PstB-like"/>
</dbReference>
<dbReference type="NCBIfam" id="TIGR00972">
    <property type="entry name" value="3a0107s01c2"/>
    <property type="match status" value="1"/>
</dbReference>
<dbReference type="PANTHER" id="PTHR43423">
    <property type="entry name" value="ABC TRANSPORTER I FAMILY MEMBER 17"/>
    <property type="match status" value="1"/>
</dbReference>
<dbReference type="PANTHER" id="PTHR43423:SF3">
    <property type="entry name" value="PHOSPHATE IMPORT ATP-BINDING PROTEIN PSTB"/>
    <property type="match status" value="1"/>
</dbReference>
<dbReference type="Pfam" id="PF00005">
    <property type="entry name" value="ABC_tran"/>
    <property type="match status" value="1"/>
</dbReference>
<dbReference type="SMART" id="SM00382">
    <property type="entry name" value="AAA"/>
    <property type="match status" value="1"/>
</dbReference>
<dbReference type="SUPFAM" id="SSF52540">
    <property type="entry name" value="P-loop containing nucleoside triphosphate hydrolases"/>
    <property type="match status" value="1"/>
</dbReference>
<dbReference type="PROSITE" id="PS00211">
    <property type="entry name" value="ABC_TRANSPORTER_1"/>
    <property type="match status" value="1"/>
</dbReference>
<dbReference type="PROSITE" id="PS50893">
    <property type="entry name" value="ABC_TRANSPORTER_2"/>
    <property type="match status" value="1"/>
</dbReference>
<dbReference type="PROSITE" id="PS51238">
    <property type="entry name" value="PSTB"/>
    <property type="match status" value="1"/>
</dbReference>
<name>PSTB_PASMU</name>
<sequence>MNTQIIQLEDTKLEVNNLNFHYGDFHALKNINMRIAKHKVTAFIGPSGCGKSTLLRSFNRIFELYPNQYATGEIKLDGENLLTSPMDISLIRAKVGMVFQKPTPFPMSIYDNVAFGIRLFEKLSKADLNDRVEWALSKAALWNEVKDKLNQSGDSLSGGQQQRLCIARGIAIKPEVLLLDEPCSALDPISTAKIEELISELKHDYTVVMVTHNMQQAARCSDYTAFMYLGELIEFDETAKIFDKPRLQRTEDYIKGRMG</sequence>